<feature type="chain" id="PRO_0000421160" description="Metallothionein type 2b">
    <location>
        <begin position="1"/>
        <end position="84"/>
    </location>
</feature>
<feature type="mutagenesis site" description="Decreased protein stability and cadmium binding." evidence="1">
    <location>
        <begin position="82"/>
        <end position="84"/>
    </location>
</feature>
<proteinExistence type="evidence at protein level"/>
<sequence length="84" mass="8414">MSCCGGNCGCGSGCQCGNGCGGCKMFPDFGSDEKITTTHTLVLGFAPAKGSVEGFEMVAGAAENDCKCGSNCSCTDCRCDPCNC</sequence>
<name>MT2B_COLES</name>
<reference key="1">
    <citation type="journal article" date="2011" name="Biosci. Biotechnol. Biochem.">
        <title>High cadmium-binding ability of a novel Colocasia esculenta metallothionein increases cadmium tolerance in Escherichia coli and Tobacco.</title>
        <authorList>
            <person name="Kim Y.O."/>
            <person name="Patel D.H."/>
            <person name="Lee D.S."/>
            <person name="Song Y."/>
            <person name="Bae H.J."/>
        </authorList>
    </citation>
    <scope>NUCLEOTIDE SEQUENCE [MRNA]</scope>
    <scope>FUNCTION</scope>
    <scope>MUTAGENESIS OF 82-CYS--CYS-84</scope>
</reference>
<reference key="2">
    <citation type="journal article" date="2012" name="J. Plant Res.">
        <title>Zn tolerance of novel Colocasia esculenta metallothionein and its domains in Escherichia coli and tobacco.</title>
        <authorList>
            <person name="Kim Y.O."/>
            <person name="Lee Y.G."/>
            <person name="Patel D.H."/>
            <person name="Kim H.M."/>
            <person name="Ahn S.J."/>
            <person name="Bae H.J."/>
        </authorList>
    </citation>
    <scope>FUNCTION</scope>
    <scope>SUBCELLULAR LOCATION</scope>
    <scope>TISSUE SPECIFICITY</scope>
    <scope>MUTAGENESIS</scope>
</reference>
<reference key="3">
    <citation type="journal article" date="2012" name="Univers. J. Med. Dent.">
        <title>Isolation, cloning and expression of novel metallothionine type II protein from Colocassia esculentum.</title>
        <authorList>
            <person name="Parmar P."/>
            <person name="Patel M."/>
            <person name="Dave B."/>
            <person name="Subramanian R.B."/>
            <person name="Bae H.J."/>
        </authorList>
    </citation>
    <scope>FUNCTION</scope>
    <scope>INDUCTION</scope>
</reference>
<comment type="function">
    <text evidence="1 2 3">Metallothioneins have a high content of cysteine residues that bind various heavy metals. Probably involved in maintaining homeostasis of essential transition metals and detoxification of toxic metals. Increases cadmium and zinc tolerance when expressed in heterologous systems. Metal chelator binding 6 cadmium or 5 zinc atoms per protein.</text>
</comment>
<comment type="subcellular location">
    <subcellularLocation>
        <location evidence="2">Cytoplasm</location>
    </subcellularLocation>
    <subcellularLocation>
        <location evidence="2">Nucleus</location>
    </subcellularLocation>
</comment>
<comment type="tissue specificity">
    <text evidence="2">Expressed in leaves, stems and roots.</text>
</comment>
<comment type="induction">
    <text evidence="3">Up-regulated by cadmium treatment.</text>
</comment>
<comment type="domain">
    <text>The N-terminal (1-23) and C-terminal (66-84) Cys-rich domains are both involved in zinc binding.</text>
</comment>
<comment type="similarity">
    <text evidence="4">Belongs to the metallothionein superfamily. Type 15 family.</text>
</comment>
<keyword id="KW-0963">Cytoplasm</keyword>
<keyword id="KW-0479">Metal-binding</keyword>
<keyword id="KW-0480">Metal-thiolate cluster</keyword>
<keyword id="KW-0539">Nucleus</keyword>
<dbReference type="EMBL" id="DQ521570">
    <property type="protein sequence ID" value="ABF71737.1"/>
    <property type="molecule type" value="mRNA"/>
</dbReference>
<dbReference type="GO" id="GO:0005737">
    <property type="term" value="C:cytoplasm"/>
    <property type="evidence" value="ECO:0007669"/>
    <property type="project" value="UniProtKB-SubCell"/>
</dbReference>
<dbReference type="GO" id="GO:0005634">
    <property type="term" value="C:nucleus"/>
    <property type="evidence" value="ECO:0007669"/>
    <property type="project" value="UniProtKB-SubCell"/>
</dbReference>
<dbReference type="GO" id="GO:0046872">
    <property type="term" value="F:metal ion binding"/>
    <property type="evidence" value="ECO:0007669"/>
    <property type="project" value="UniProtKB-KW"/>
</dbReference>
<dbReference type="InterPro" id="IPR000347">
    <property type="entry name" value="Metalthion_15p"/>
</dbReference>
<dbReference type="PANTHER" id="PTHR33543">
    <property type="entry name" value="METALLOTHIONEIN-LIKE PROTEIN 2A"/>
    <property type="match status" value="1"/>
</dbReference>
<dbReference type="PANTHER" id="PTHR33543:SF33">
    <property type="entry name" value="METALLOTHIONEIN-LIKE PROTEIN 2B"/>
    <property type="match status" value="1"/>
</dbReference>
<dbReference type="Pfam" id="PF01439">
    <property type="entry name" value="Metallothio_2"/>
    <property type="match status" value="1"/>
</dbReference>
<organism>
    <name type="scientific">Colocasia esculenta</name>
    <name type="common">Wild taro</name>
    <name type="synonym">Arum esculentum</name>
    <dbReference type="NCBI Taxonomy" id="4460"/>
    <lineage>
        <taxon>Eukaryota</taxon>
        <taxon>Viridiplantae</taxon>
        <taxon>Streptophyta</taxon>
        <taxon>Embryophyta</taxon>
        <taxon>Tracheophyta</taxon>
        <taxon>Spermatophyta</taxon>
        <taxon>Magnoliopsida</taxon>
        <taxon>Liliopsida</taxon>
        <taxon>Araceae</taxon>
        <taxon>Aroideae</taxon>
        <taxon>Colocasieae</taxon>
        <taxon>Colocasia</taxon>
    </lineage>
</organism>
<accession>Q19LA2</accession>
<evidence type="ECO:0000269" key="1">
    <source>
    </source>
</evidence>
<evidence type="ECO:0000269" key="2">
    <source>
    </source>
</evidence>
<evidence type="ECO:0000269" key="3">
    <source ref="3"/>
</evidence>
<evidence type="ECO:0000305" key="4"/>
<protein>
    <recommendedName>
        <fullName>Metallothionein type 2b</fullName>
        <shortName>CeMT2b</shortName>
    </recommendedName>
</protein>